<sequence>MGKPGFSPRGGGGGGGGGGGGFRGRGGGGGGGGGGFGGGRGRGGGGDRGGRGGFGGGRGGGGRGGGGGGGRGAFGGRGGGGGRGGGGRGGGGRGGGGRGGGAGGFKGGKTVTIEPHRHEGVFIARGKEDALVTRNFVPGSEVYGEKRISVETNGEKIEYRVWNPFRSKLAAAVLGGVEQIHMPPGSKVLYLGAASGTTVSHVSDVVGPEGLVYAVEFSHRSGRDLINVAKKRTNIIPIIEDARHPHKYRMLVGMVDTIFADVAQPDQGRIVALNAQHFLKNGGHFVISIKASCIDSTAQPEAVFAAEVKKMQADKLKPQEQLTLEPYERDHAVVVGVYRPPPKQ</sequence>
<keyword id="KW-0488">Methylation</keyword>
<keyword id="KW-0489">Methyltransferase</keyword>
<keyword id="KW-0539">Nucleus</keyword>
<keyword id="KW-1185">Reference proteome</keyword>
<keyword id="KW-0687">Ribonucleoprotein</keyword>
<keyword id="KW-0694">RNA-binding</keyword>
<keyword id="KW-0698">rRNA processing</keyword>
<keyword id="KW-0949">S-adenosyl-L-methionine</keyword>
<keyword id="KW-0808">Transferase</keyword>
<proteinExistence type="evidence at transcript level"/>
<reference evidence="7" key="1">
    <citation type="journal article" date="2000" name="Science">
        <title>The genome sequence of Drosophila melanogaster.</title>
        <authorList>
            <person name="Adams M.D."/>
            <person name="Celniker S.E."/>
            <person name="Holt R.A."/>
            <person name="Evans C.A."/>
            <person name="Gocayne J.D."/>
            <person name="Amanatides P.G."/>
            <person name="Scherer S.E."/>
            <person name="Li P.W."/>
            <person name="Hoskins R.A."/>
            <person name="Galle R.F."/>
            <person name="George R.A."/>
            <person name="Lewis S.E."/>
            <person name="Richards S."/>
            <person name="Ashburner M."/>
            <person name="Henderson S.N."/>
            <person name="Sutton G.G."/>
            <person name="Wortman J.R."/>
            <person name="Yandell M.D."/>
            <person name="Zhang Q."/>
            <person name="Chen L.X."/>
            <person name="Brandon R.C."/>
            <person name="Rogers Y.-H.C."/>
            <person name="Blazej R.G."/>
            <person name="Champe M."/>
            <person name="Pfeiffer B.D."/>
            <person name="Wan K.H."/>
            <person name="Doyle C."/>
            <person name="Baxter E.G."/>
            <person name="Helt G."/>
            <person name="Nelson C.R."/>
            <person name="Miklos G.L.G."/>
            <person name="Abril J.F."/>
            <person name="Agbayani A."/>
            <person name="An H.-J."/>
            <person name="Andrews-Pfannkoch C."/>
            <person name="Baldwin D."/>
            <person name="Ballew R.M."/>
            <person name="Basu A."/>
            <person name="Baxendale J."/>
            <person name="Bayraktaroglu L."/>
            <person name="Beasley E.M."/>
            <person name="Beeson K.Y."/>
            <person name="Benos P.V."/>
            <person name="Berman B.P."/>
            <person name="Bhandari D."/>
            <person name="Bolshakov S."/>
            <person name="Borkova D."/>
            <person name="Botchan M.R."/>
            <person name="Bouck J."/>
            <person name="Brokstein P."/>
            <person name="Brottier P."/>
            <person name="Burtis K.C."/>
            <person name="Busam D.A."/>
            <person name="Butler H."/>
            <person name="Cadieu E."/>
            <person name="Center A."/>
            <person name="Chandra I."/>
            <person name="Cherry J.M."/>
            <person name="Cawley S."/>
            <person name="Dahlke C."/>
            <person name="Davenport L.B."/>
            <person name="Davies P."/>
            <person name="de Pablos B."/>
            <person name="Delcher A."/>
            <person name="Deng Z."/>
            <person name="Mays A.D."/>
            <person name="Dew I."/>
            <person name="Dietz S.M."/>
            <person name="Dodson K."/>
            <person name="Doup L.E."/>
            <person name="Downes M."/>
            <person name="Dugan-Rocha S."/>
            <person name="Dunkov B.C."/>
            <person name="Dunn P."/>
            <person name="Durbin K.J."/>
            <person name="Evangelista C.C."/>
            <person name="Ferraz C."/>
            <person name="Ferriera S."/>
            <person name="Fleischmann W."/>
            <person name="Fosler C."/>
            <person name="Gabrielian A.E."/>
            <person name="Garg N.S."/>
            <person name="Gelbart W.M."/>
            <person name="Glasser K."/>
            <person name="Glodek A."/>
            <person name="Gong F."/>
            <person name="Gorrell J.H."/>
            <person name="Gu Z."/>
            <person name="Guan P."/>
            <person name="Harris M."/>
            <person name="Harris N.L."/>
            <person name="Harvey D.A."/>
            <person name="Heiman T.J."/>
            <person name="Hernandez J.R."/>
            <person name="Houck J."/>
            <person name="Hostin D."/>
            <person name="Houston K.A."/>
            <person name="Howland T.J."/>
            <person name="Wei M.-H."/>
            <person name="Ibegwam C."/>
            <person name="Jalali M."/>
            <person name="Kalush F."/>
            <person name="Karpen G.H."/>
            <person name="Ke Z."/>
            <person name="Kennison J.A."/>
            <person name="Ketchum K.A."/>
            <person name="Kimmel B.E."/>
            <person name="Kodira C.D."/>
            <person name="Kraft C.L."/>
            <person name="Kravitz S."/>
            <person name="Kulp D."/>
            <person name="Lai Z."/>
            <person name="Lasko P."/>
            <person name="Lei Y."/>
            <person name="Levitsky A.A."/>
            <person name="Li J.H."/>
            <person name="Li Z."/>
            <person name="Liang Y."/>
            <person name="Lin X."/>
            <person name="Liu X."/>
            <person name="Mattei B."/>
            <person name="McIntosh T.C."/>
            <person name="McLeod M.P."/>
            <person name="McPherson D."/>
            <person name="Merkulov G."/>
            <person name="Milshina N.V."/>
            <person name="Mobarry C."/>
            <person name="Morris J."/>
            <person name="Moshrefi A."/>
            <person name="Mount S.M."/>
            <person name="Moy M."/>
            <person name="Murphy B."/>
            <person name="Murphy L."/>
            <person name="Muzny D.M."/>
            <person name="Nelson D.L."/>
            <person name="Nelson D.R."/>
            <person name="Nelson K.A."/>
            <person name="Nixon K."/>
            <person name="Nusskern D.R."/>
            <person name="Pacleb J.M."/>
            <person name="Palazzolo M."/>
            <person name="Pittman G.S."/>
            <person name="Pan S."/>
            <person name="Pollard J."/>
            <person name="Puri V."/>
            <person name="Reese M.G."/>
            <person name="Reinert K."/>
            <person name="Remington K."/>
            <person name="Saunders R.D.C."/>
            <person name="Scheeler F."/>
            <person name="Shen H."/>
            <person name="Shue B.C."/>
            <person name="Siden-Kiamos I."/>
            <person name="Simpson M."/>
            <person name="Skupski M.P."/>
            <person name="Smith T.J."/>
            <person name="Spier E."/>
            <person name="Spradling A.C."/>
            <person name="Stapleton M."/>
            <person name="Strong R."/>
            <person name="Sun E."/>
            <person name="Svirskas R."/>
            <person name="Tector C."/>
            <person name="Turner R."/>
            <person name="Venter E."/>
            <person name="Wang A.H."/>
            <person name="Wang X."/>
            <person name="Wang Z.-Y."/>
            <person name="Wassarman D.A."/>
            <person name="Weinstock G.M."/>
            <person name="Weissenbach J."/>
            <person name="Williams S.M."/>
            <person name="Woodage T."/>
            <person name="Worley K.C."/>
            <person name="Wu D."/>
            <person name="Yang S."/>
            <person name="Yao Q.A."/>
            <person name="Ye J."/>
            <person name="Yeh R.-F."/>
            <person name="Zaveri J.S."/>
            <person name="Zhan M."/>
            <person name="Zhang G."/>
            <person name="Zhao Q."/>
            <person name="Zheng L."/>
            <person name="Zheng X.H."/>
            <person name="Zhong F.N."/>
            <person name="Zhong W."/>
            <person name="Zhou X."/>
            <person name="Zhu S.C."/>
            <person name="Zhu X."/>
            <person name="Smith H.O."/>
            <person name="Gibbs R.A."/>
            <person name="Myers E.W."/>
            <person name="Rubin G.M."/>
            <person name="Venter J.C."/>
        </authorList>
    </citation>
    <scope>NUCLEOTIDE SEQUENCE [LARGE SCALE GENOMIC DNA]</scope>
    <source>
        <strain evidence="4">Berkeley</strain>
    </source>
</reference>
<reference evidence="6 7" key="2">
    <citation type="journal article" date="2002" name="Genome Biol.">
        <title>Annotation of the Drosophila melanogaster euchromatic genome: a systematic review.</title>
        <authorList>
            <person name="Misra S."/>
            <person name="Crosby M.A."/>
            <person name="Mungall C.J."/>
            <person name="Matthews B.B."/>
            <person name="Campbell K.S."/>
            <person name="Hradecky P."/>
            <person name="Huang Y."/>
            <person name="Kaminker J.S."/>
            <person name="Millburn G.H."/>
            <person name="Prochnik S.E."/>
            <person name="Smith C.D."/>
            <person name="Tupy J.L."/>
            <person name="Whitfield E.J."/>
            <person name="Bayraktaroglu L."/>
            <person name="Berman B.P."/>
            <person name="Bettencourt B.R."/>
            <person name="Celniker S.E."/>
            <person name="de Grey A.D.N.J."/>
            <person name="Drysdale R.A."/>
            <person name="Harris N.L."/>
            <person name="Richter J."/>
            <person name="Russo S."/>
            <person name="Schroeder A.J."/>
            <person name="Shu S.Q."/>
            <person name="Stapleton M."/>
            <person name="Yamada C."/>
            <person name="Ashburner M."/>
            <person name="Gelbart W.M."/>
            <person name="Rubin G.M."/>
            <person name="Lewis S.E."/>
        </authorList>
    </citation>
    <scope>GENOME REANNOTATION</scope>
    <source>
        <strain>Berkeley</strain>
    </source>
</reference>
<reference evidence="8" key="3">
    <citation type="journal article" date="2002" name="Genome Biol.">
        <title>A Drosophila full-length cDNA resource.</title>
        <authorList>
            <person name="Stapleton M."/>
            <person name="Carlson J.W."/>
            <person name="Brokstein P."/>
            <person name="Yu C."/>
            <person name="Champe M."/>
            <person name="George R.A."/>
            <person name="Guarin H."/>
            <person name="Kronmiller B."/>
            <person name="Pacleb J.M."/>
            <person name="Park S."/>
            <person name="Wan K.H."/>
            <person name="Rubin G.M."/>
            <person name="Celniker S.E."/>
        </authorList>
    </citation>
    <scope>NUCLEOTIDE SEQUENCE [LARGE SCALE MRNA]</scope>
    <source>
        <strain evidence="5">Berkeley</strain>
        <tissue evidence="5">Embryo</tissue>
    </source>
</reference>
<reference evidence="6 9" key="4">
    <citation type="journal article" date="1987" name="Nucleic Acids Res.">
        <title>A novel GC-rich dispersed repeat sequence in Drosophila melanogaster.</title>
        <authorList>
            <person name="Flavell A.J."/>
            <person name="Dyson J."/>
            <person name="Ish-Horowicz D."/>
        </authorList>
    </citation>
    <scope>NUCLEOTIDE SEQUENCE [GENOMIC DNA] OF 5-140</scope>
</reference>
<comment type="function">
    <text evidence="1">S-adenosyl-L-methionine-dependent methyltransferase that has the ability to methylate both RNAs and proteins. Involved in pre-rRNA processing. Utilizes the methyl donor S-adenosyl-L-methionine to catalyze the site-specific 2'-hydroxyl methylation of ribose moieties in pre-ribosomal RNA. Site specificity is provided by a guide RNA that base pairs with the substrate. Methylation occurs at a characteristic distance from the sequence involved in base pairing with the guide RNA. Also acts as a protein methyltransferase by mediating methylation of 'Gln-105' of histone H2A (H2AQ105me), a modification that impairs binding of the FACT complex and is specifically present at 35S ribosomal DNA locus (By similarity).</text>
</comment>
<comment type="catalytic activity">
    <reaction>
        <text>L-glutaminyl-[histone H2A] + S-adenosyl-L-methionine = N(5)-methyl-L-glutaminyl-[histone H2A] + S-adenosyl-L-homocysteine + H(+)</text>
        <dbReference type="Rhea" id="RHEA:50904"/>
        <dbReference type="Rhea" id="RHEA-COMP:12837"/>
        <dbReference type="Rhea" id="RHEA-COMP:12839"/>
        <dbReference type="ChEBI" id="CHEBI:15378"/>
        <dbReference type="ChEBI" id="CHEBI:30011"/>
        <dbReference type="ChEBI" id="CHEBI:57856"/>
        <dbReference type="ChEBI" id="CHEBI:59789"/>
        <dbReference type="ChEBI" id="CHEBI:61891"/>
    </reaction>
</comment>
<comment type="subunit">
    <text evidence="1">Component of box C/D small nucleolar ribonucleoprotein (snoRNP) particles. It is associated with the U3, U8 and U13 small nuclear RNAs.</text>
</comment>
<comment type="subcellular location">
    <subcellularLocation>
        <location evidence="1">Nucleus</location>
        <location evidence="1">Nucleolus</location>
    </subcellularLocation>
    <text evidence="1">Fibrillar region of the nucleolus.</text>
</comment>
<comment type="PTM">
    <text evidence="2">By homology to other fibrillarins, some or all of the N-terminal domain arginines are modified to asymmetric dimethylarginine (DMA).</text>
</comment>
<comment type="similarity">
    <text evidence="6">Belongs to the methyltransferase superfamily. Fibrillarin family.</text>
</comment>
<comment type="sequence caution" evidence="6">
    <conflict type="erroneous gene model prediction">
        <sequence resource="EMBL-CDS" id="CAA28903"/>
    </conflict>
</comment>
<comment type="sequence caution" evidence="6">
    <conflict type="frameshift">
        <sequence resource="EMBL-CDS" id="CAA28903"/>
    </conflict>
</comment>
<gene>
    <name evidence="7" type="primary">Fib</name>
    <name type="ORF">CG9888</name>
</gene>
<organism>
    <name type="scientific">Drosophila melanogaster</name>
    <name type="common">Fruit fly</name>
    <dbReference type="NCBI Taxonomy" id="7227"/>
    <lineage>
        <taxon>Eukaryota</taxon>
        <taxon>Metazoa</taxon>
        <taxon>Ecdysozoa</taxon>
        <taxon>Arthropoda</taxon>
        <taxon>Hexapoda</taxon>
        <taxon>Insecta</taxon>
        <taxon>Pterygota</taxon>
        <taxon>Neoptera</taxon>
        <taxon>Endopterygota</taxon>
        <taxon>Diptera</taxon>
        <taxon>Brachycera</taxon>
        <taxon>Muscomorpha</taxon>
        <taxon>Ephydroidea</taxon>
        <taxon>Drosophilidae</taxon>
        <taxon>Drosophila</taxon>
        <taxon>Sophophora</taxon>
    </lineage>
</organism>
<dbReference type="EC" id="2.1.1.-"/>
<dbReference type="EMBL" id="AE013599">
    <property type="protein sequence ID" value="AAF46950.1"/>
    <property type="molecule type" value="Genomic_DNA"/>
</dbReference>
<dbReference type="EMBL" id="BT001738">
    <property type="protein sequence ID" value="AAN71493.1"/>
    <property type="molecule type" value="mRNA"/>
</dbReference>
<dbReference type="EMBL" id="X05285">
    <property type="protein sequence ID" value="CAA28903.1"/>
    <property type="status" value="ALT_SEQ"/>
    <property type="molecule type" value="Genomic_DNA"/>
</dbReference>
<dbReference type="RefSeq" id="NP_523817.1">
    <property type="nucleotide sequence ID" value="NM_079093.4"/>
</dbReference>
<dbReference type="SMR" id="Q9W1V3"/>
<dbReference type="BioGRID" id="63268">
    <property type="interactions" value="19"/>
</dbReference>
<dbReference type="ComplexPortal" id="CPX-2761">
    <property type="entry name" value="C/D small nucleolar ribonuclear protein complex"/>
</dbReference>
<dbReference type="FunCoup" id="Q9W1V3">
    <property type="interactions" value="1371"/>
</dbReference>
<dbReference type="IntAct" id="Q9W1V3">
    <property type="interactions" value="9"/>
</dbReference>
<dbReference type="MINT" id="Q9W1V3"/>
<dbReference type="STRING" id="7227.FBpp0071892"/>
<dbReference type="PaxDb" id="7227-FBpp0071892"/>
<dbReference type="DNASU" id="37662"/>
<dbReference type="EnsemblMetazoa" id="FBtr0071982">
    <property type="protein sequence ID" value="FBpp0071892"/>
    <property type="gene ID" value="FBgn0003062"/>
</dbReference>
<dbReference type="GeneID" id="37662"/>
<dbReference type="KEGG" id="dme:Dmel_CG9888"/>
<dbReference type="UCSC" id="CG9888-RA">
    <property type="organism name" value="d. melanogaster"/>
</dbReference>
<dbReference type="AGR" id="FB:FBgn0003062"/>
<dbReference type="CTD" id="37662"/>
<dbReference type="FlyBase" id="FBgn0003062">
    <property type="gene designation" value="Fib"/>
</dbReference>
<dbReference type="VEuPathDB" id="VectorBase:FBgn0003062"/>
<dbReference type="eggNOG" id="KOG1596">
    <property type="taxonomic scope" value="Eukaryota"/>
</dbReference>
<dbReference type="GeneTree" id="ENSGT00550000074792"/>
<dbReference type="HOGENOM" id="CLU_059055_1_0_1"/>
<dbReference type="InParanoid" id="Q9W1V3"/>
<dbReference type="OMA" id="WNPNKSK"/>
<dbReference type="OrthoDB" id="1859733at2759"/>
<dbReference type="PhylomeDB" id="Q9W1V3"/>
<dbReference type="Reactome" id="R-DME-6791226">
    <property type="pathway name" value="Major pathway of rRNA processing in the nucleolus and cytosol"/>
</dbReference>
<dbReference type="SignaLink" id="Q9W1V3"/>
<dbReference type="BioGRID-ORCS" id="37662">
    <property type="hits" value="0 hits in 1 CRISPR screen"/>
</dbReference>
<dbReference type="CD-CODE" id="34A76419">
    <property type="entry name" value="Nucleolus"/>
</dbReference>
<dbReference type="CD-CODE" id="4663B525">
    <property type="entry name" value="Nuclear body"/>
</dbReference>
<dbReference type="CD-CODE" id="56BF1CA9">
    <property type="entry name" value="Dense fibrillar component"/>
</dbReference>
<dbReference type="GenomeRNAi" id="37662"/>
<dbReference type="PRO" id="PR:Q9W1V3"/>
<dbReference type="Proteomes" id="UP000000803">
    <property type="component" value="Chromosome 2R"/>
</dbReference>
<dbReference type="Bgee" id="FBgn0003062">
    <property type="expression patterns" value="Expressed in adult enteroendocrine precursor cell in adult midgut (Drosophila) and 124 other cell types or tissues"/>
</dbReference>
<dbReference type="ExpressionAtlas" id="Q9W1V3">
    <property type="expression patterns" value="baseline and differential"/>
</dbReference>
<dbReference type="GO" id="GO:0031428">
    <property type="term" value="C:box C/D methylation guide snoRNP complex"/>
    <property type="evidence" value="ECO:0000318"/>
    <property type="project" value="GO_Central"/>
</dbReference>
<dbReference type="GO" id="GO:0015030">
    <property type="term" value="C:Cajal body"/>
    <property type="evidence" value="ECO:0000314"/>
    <property type="project" value="FlyBase"/>
</dbReference>
<dbReference type="GO" id="GO:0001651">
    <property type="term" value="C:dense fibrillar component"/>
    <property type="evidence" value="ECO:0000250"/>
    <property type="project" value="UniProtKB"/>
</dbReference>
<dbReference type="GO" id="GO:0005730">
    <property type="term" value="C:nucleolus"/>
    <property type="evidence" value="ECO:0000314"/>
    <property type="project" value="UniProtKB"/>
</dbReference>
<dbReference type="GO" id="GO:0032040">
    <property type="term" value="C:small-subunit processome"/>
    <property type="evidence" value="ECO:0000318"/>
    <property type="project" value="GO_Central"/>
</dbReference>
<dbReference type="GO" id="GO:1990259">
    <property type="term" value="F:histone H2AQ104 methyltransferase activity"/>
    <property type="evidence" value="ECO:0000318"/>
    <property type="project" value="GO_Central"/>
</dbReference>
<dbReference type="GO" id="GO:0003723">
    <property type="term" value="F:RNA binding"/>
    <property type="evidence" value="ECO:0000318"/>
    <property type="project" value="GO_Central"/>
</dbReference>
<dbReference type="GO" id="GO:0008649">
    <property type="term" value="F:rRNA methyltransferase activity"/>
    <property type="evidence" value="ECO:0000318"/>
    <property type="project" value="GO_Central"/>
</dbReference>
<dbReference type="GO" id="GO:0000494">
    <property type="term" value="P:box C/D sno(s)RNA 3'-end processing"/>
    <property type="evidence" value="ECO:0000318"/>
    <property type="project" value="GO_Central"/>
</dbReference>
<dbReference type="GO" id="GO:0031167">
    <property type="term" value="P:rRNA methylation"/>
    <property type="evidence" value="ECO:0000318"/>
    <property type="project" value="GO_Central"/>
</dbReference>
<dbReference type="FunFam" id="3.30.200.20:FF:000056">
    <property type="entry name" value="Fibrillarin like 1"/>
    <property type="match status" value="1"/>
</dbReference>
<dbReference type="FunFam" id="3.40.50.150:FF:000001">
    <property type="entry name" value="Fibrillarin like 1"/>
    <property type="match status" value="1"/>
</dbReference>
<dbReference type="Gene3D" id="3.30.200.20">
    <property type="entry name" value="Phosphorylase Kinase, domain 1"/>
    <property type="match status" value="1"/>
</dbReference>
<dbReference type="Gene3D" id="3.40.50.150">
    <property type="entry name" value="Vaccinia Virus protein VP39"/>
    <property type="match status" value="1"/>
</dbReference>
<dbReference type="HAMAP" id="MF_00351">
    <property type="entry name" value="RNA_methyltransf_FlpA"/>
    <property type="match status" value="1"/>
</dbReference>
<dbReference type="InterPro" id="IPR000692">
    <property type="entry name" value="Fibrillarin"/>
</dbReference>
<dbReference type="InterPro" id="IPR020813">
    <property type="entry name" value="Fibrillarin_CS"/>
</dbReference>
<dbReference type="InterPro" id="IPR029063">
    <property type="entry name" value="SAM-dependent_MTases_sf"/>
</dbReference>
<dbReference type="NCBIfam" id="NF003276">
    <property type="entry name" value="PRK04266.1-2"/>
    <property type="match status" value="1"/>
</dbReference>
<dbReference type="PANTHER" id="PTHR10335:SF17">
    <property type="entry name" value="FIBRILLARIN"/>
    <property type="match status" value="1"/>
</dbReference>
<dbReference type="PANTHER" id="PTHR10335">
    <property type="entry name" value="RRNA 2-O-METHYLTRANSFERASE FIBRILLARIN"/>
    <property type="match status" value="1"/>
</dbReference>
<dbReference type="Pfam" id="PF01269">
    <property type="entry name" value="Fibrillarin"/>
    <property type="match status" value="1"/>
</dbReference>
<dbReference type="PRINTS" id="PR00052">
    <property type="entry name" value="FIBRILLARIN"/>
</dbReference>
<dbReference type="SMART" id="SM01206">
    <property type="entry name" value="Fibrillarin"/>
    <property type="match status" value="1"/>
</dbReference>
<dbReference type="SUPFAM" id="SSF53335">
    <property type="entry name" value="S-adenosyl-L-methionine-dependent methyltransferases"/>
    <property type="match status" value="1"/>
</dbReference>
<dbReference type="PROSITE" id="PS00566">
    <property type="entry name" value="FIBRILLARIN"/>
    <property type="match status" value="1"/>
</dbReference>
<protein>
    <recommendedName>
        <fullName>rRNA 2'-O-methyltransferase fibrillarin</fullName>
        <ecNumber>2.1.1.-</ecNumber>
    </recommendedName>
    <alternativeName>
        <fullName>Histone-glutamine methyltransferase</fullName>
    </alternativeName>
</protein>
<name>FBRL_DROME</name>
<evidence type="ECO:0000250" key="1"/>
<evidence type="ECO:0000250" key="2">
    <source>
        <dbReference type="UniProtKB" id="P22509"/>
    </source>
</evidence>
<evidence type="ECO:0000256" key="3">
    <source>
        <dbReference type="SAM" id="MobiDB-lite"/>
    </source>
</evidence>
<evidence type="ECO:0000269" key="4">
    <source>
    </source>
</evidence>
<evidence type="ECO:0000269" key="5">
    <source>
    </source>
</evidence>
<evidence type="ECO:0000305" key="6"/>
<evidence type="ECO:0000312" key="7">
    <source>
        <dbReference type="EMBL" id="AAF46950.1"/>
    </source>
</evidence>
<evidence type="ECO:0000312" key="8">
    <source>
        <dbReference type="EMBL" id="AAN71493.1"/>
    </source>
</evidence>
<evidence type="ECO:0000312" key="9">
    <source>
        <dbReference type="EMBL" id="CAA28903.1"/>
    </source>
</evidence>
<accession>Q9W1V3</accession>
<accession>Q24348</accession>
<accession>Q8IGK5</accession>
<feature type="chain" id="PRO_0000148513" description="rRNA 2'-O-methyltransferase fibrillarin">
    <location>
        <begin position="1"/>
        <end position="344"/>
    </location>
</feature>
<feature type="region of interest" description="Disordered" evidence="3">
    <location>
        <begin position="1"/>
        <end position="113"/>
    </location>
</feature>
<feature type="compositionally biased region" description="Gly residues" evidence="3">
    <location>
        <begin position="8"/>
        <end position="107"/>
    </location>
</feature>
<feature type="binding site" evidence="1">
    <location>
        <begin position="197"/>
        <end position="198"/>
    </location>
    <ligand>
        <name>S-adenosyl-L-methionine</name>
        <dbReference type="ChEBI" id="CHEBI:59789"/>
    </ligand>
</feature>
<feature type="binding site" evidence="1">
    <location>
        <begin position="216"/>
        <end position="217"/>
    </location>
    <ligand>
        <name>S-adenosyl-L-methionine</name>
        <dbReference type="ChEBI" id="CHEBI:59789"/>
    </ligand>
</feature>
<feature type="binding site" evidence="1">
    <location>
        <begin position="241"/>
        <end position="242"/>
    </location>
    <ligand>
        <name>S-adenosyl-L-methionine</name>
        <dbReference type="ChEBI" id="CHEBI:59789"/>
    </ligand>
</feature>
<feature type="binding site" evidence="1">
    <location>
        <begin position="261"/>
        <end position="264"/>
    </location>
    <ligand>
        <name>S-adenosyl-L-methionine</name>
        <dbReference type="ChEBI" id="CHEBI:59789"/>
    </ligand>
</feature>
<feature type="modified residue" description="Asymmetric dimethylarginine" evidence="2">
    <location>
        <position position="9"/>
    </location>
</feature>
<feature type="modified residue" description="Asymmetric dimethylarginine" evidence="2">
    <location>
        <position position="23"/>
    </location>
</feature>
<feature type="modified residue" description="Asymmetric dimethylarginine" evidence="2">
    <location>
        <position position="25"/>
    </location>
</feature>
<feature type="modified residue" description="Asymmetric dimethylarginine" evidence="2">
    <location>
        <position position="40"/>
    </location>
</feature>
<feature type="modified residue" description="Asymmetric dimethylarginine" evidence="2">
    <location>
        <position position="42"/>
    </location>
</feature>
<feature type="modified residue" description="Asymmetric dimethylarginine" evidence="2">
    <location>
        <position position="48"/>
    </location>
</feature>
<feature type="modified residue" description="Asymmetric dimethylarginine" evidence="2">
    <location>
        <position position="51"/>
    </location>
</feature>
<feature type="modified residue" description="Asymmetric dimethylarginine" evidence="2">
    <location>
        <position position="58"/>
    </location>
</feature>
<feature type="modified residue" description="Asymmetric dimethylarginine" evidence="2">
    <location>
        <position position="63"/>
    </location>
</feature>
<feature type="modified residue" description="Asymmetric dimethylarginine" evidence="2">
    <location>
        <position position="71"/>
    </location>
</feature>
<feature type="modified residue" description="Asymmetric dimethylarginine" evidence="2">
    <location>
        <position position="77"/>
    </location>
</feature>
<feature type="modified residue" description="Asymmetric dimethylarginine" evidence="2">
    <location>
        <position position="83"/>
    </location>
</feature>
<feature type="modified residue" description="Asymmetric dimethylarginine" evidence="2">
    <location>
        <position position="88"/>
    </location>
</feature>
<feature type="modified residue" description="Asymmetric dimethylarginine" evidence="2">
    <location>
        <position position="93"/>
    </location>
</feature>
<feature type="modified residue" description="Asymmetric dimethylarginine" evidence="2">
    <location>
        <position position="98"/>
    </location>
</feature>
<feature type="sequence conflict" description="In Ref. 3; AAN71493." evidence="6" ref="3">
    <location>
        <begin position="55"/>
        <end position="67"/>
    </location>
</feature>
<feature type="sequence conflict" description="In Ref. 3; AAN71493." evidence="6" ref="3">
    <original>R</original>
    <variation>G</variation>
    <location>
        <position position="134"/>
    </location>
</feature>